<proteinExistence type="inferred from homology"/>
<accession>B0WC36</accession>
<evidence type="ECO:0000255" key="1">
    <source>
        <dbReference type="HAMAP-Rule" id="MF_03027"/>
    </source>
</evidence>
<evidence type="ECO:0000256" key="2">
    <source>
        <dbReference type="SAM" id="MobiDB-lite"/>
    </source>
</evidence>
<gene>
    <name type="ORF">CPIJ004506</name>
</gene>
<dbReference type="EMBL" id="DS231885">
    <property type="protein sequence ID" value="EDS43188.1"/>
    <property type="molecule type" value="Genomic_DNA"/>
</dbReference>
<dbReference type="RefSeq" id="XP_001846270.1">
    <property type="nucleotide sequence ID" value="XM_001846218.1"/>
</dbReference>
<dbReference type="SMR" id="B0WC36"/>
<dbReference type="FunCoup" id="B0WC36">
    <property type="interactions" value="1366"/>
</dbReference>
<dbReference type="STRING" id="7176.B0WC36"/>
<dbReference type="EnsemblMetazoa" id="CPIJ004506-RA">
    <property type="protein sequence ID" value="CPIJ004506-PA"/>
    <property type="gene ID" value="CPIJ004506"/>
</dbReference>
<dbReference type="KEGG" id="cqu:CpipJ_CPIJ004506"/>
<dbReference type="VEuPathDB" id="VectorBase:CPIJ004506"/>
<dbReference type="VEuPathDB" id="VectorBase:CQUJHB008707"/>
<dbReference type="eggNOG" id="KOG0650">
    <property type="taxonomic scope" value="Eukaryota"/>
</dbReference>
<dbReference type="HOGENOM" id="CLU_011390_1_0_1"/>
<dbReference type="InParanoid" id="B0WC36"/>
<dbReference type="OMA" id="MRPAKGE"/>
<dbReference type="OrthoDB" id="5571054at2759"/>
<dbReference type="PhylomeDB" id="B0WC36"/>
<dbReference type="Proteomes" id="UP000002320">
    <property type="component" value="Unassembled WGS sequence"/>
</dbReference>
<dbReference type="GO" id="GO:0005654">
    <property type="term" value="C:nucleoplasm"/>
    <property type="evidence" value="ECO:0007669"/>
    <property type="project" value="UniProtKB-SubCell"/>
</dbReference>
<dbReference type="GO" id="GO:0070545">
    <property type="term" value="C:PeBoW complex"/>
    <property type="evidence" value="ECO:0007669"/>
    <property type="project" value="TreeGrafter"/>
</dbReference>
<dbReference type="GO" id="GO:0030687">
    <property type="term" value="C:preribosome, large subunit precursor"/>
    <property type="evidence" value="ECO:0007669"/>
    <property type="project" value="UniProtKB-UniRule"/>
</dbReference>
<dbReference type="GO" id="GO:0043021">
    <property type="term" value="F:ribonucleoprotein complex binding"/>
    <property type="evidence" value="ECO:0007669"/>
    <property type="project" value="UniProtKB-UniRule"/>
</dbReference>
<dbReference type="GO" id="GO:0000466">
    <property type="term" value="P:maturation of 5.8S rRNA from tricistronic rRNA transcript (SSU-rRNA, 5.8S rRNA, LSU-rRNA)"/>
    <property type="evidence" value="ECO:0007669"/>
    <property type="project" value="UniProtKB-UniRule"/>
</dbReference>
<dbReference type="GO" id="GO:0000463">
    <property type="term" value="P:maturation of LSU-rRNA from tricistronic rRNA transcript (SSU-rRNA, 5.8S rRNA, LSU-rRNA)"/>
    <property type="evidence" value="ECO:0007669"/>
    <property type="project" value="UniProtKB-UniRule"/>
</dbReference>
<dbReference type="FunFam" id="2.130.10.10:FF:000061">
    <property type="entry name" value="Ribosome biogenesis protein BOP1 homolog"/>
    <property type="match status" value="1"/>
</dbReference>
<dbReference type="Gene3D" id="2.130.10.10">
    <property type="entry name" value="YVTN repeat-like/Quinoprotein amine dehydrogenase"/>
    <property type="match status" value="1"/>
</dbReference>
<dbReference type="HAMAP" id="MF_03027">
    <property type="entry name" value="BOP1"/>
    <property type="match status" value="1"/>
</dbReference>
<dbReference type="InterPro" id="IPR028598">
    <property type="entry name" value="BOP1/Erb1"/>
</dbReference>
<dbReference type="InterPro" id="IPR012953">
    <property type="entry name" value="BOP1_N_dom"/>
</dbReference>
<dbReference type="InterPro" id="IPR015943">
    <property type="entry name" value="WD40/YVTN_repeat-like_dom_sf"/>
</dbReference>
<dbReference type="InterPro" id="IPR019775">
    <property type="entry name" value="WD40_repeat_CS"/>
</dbReference>
<dbReference type="InterPro" id="IPR036322">
    <property type="entry name" value="WD40_repeat_dom_sf"/>
</dbReference>
<dbReference type="InterPro" id="IPR001680">
    <property type="entry name" value="WD40_rpt"/>
</dbReference>
<dbReference type="PANTHER" id="PTHR17605:SF0">
    <property type="entry name" value="RIBOSOME BIOGENESIS PROTEIN BOP1"/>
    <property type="match status" value="1"/>
</dbReference>
<dbReference type="PANTHER" id="PTHR17605">
    <property type="entry name" value="RIBOSOME BIOGENESIS PROTEIN BOP1 BLOCK OF PROLIFERATION 1 PROTEIN"/>
    <property type="match status" value="1"/>
</dbReference>
<dbReference type="Pfam" id="PF08145">
    <property type="entry name" value="BOP1NT"/>
    <property type="match status" value="1"/>
</dbReference>
<dbReference type="Pfam" id="PF00400">
    <property type="entry name" value="WD40"/>
    <property type="match status" value="3"/>
</dbReference>
<dbReference type="SMART" id="SM01035">
    <property type="entry name" value="BOP1NT"/>
    <property type="match status" value="1"/>
</dbReference>
<dbReference type="SMART" id="SM00320">
    <property type="entry name" value="WD40"/>
    <property type="match status" value="6"/>
</dbReference>
<dbReference type="SUPFAM" id="SSF50978">
    <property type="entry name" value="WD40 repeat-like"/>
    <property type="match status" value="1"/>
</dbReference>
<dbReference type="PROSITE" id="PS00678">
    <property type="entry name" value="WD_REPEATS_1"/>
    <property type="match status" value="1"/>
</dbReference>
<dbReference type="PROSITE" id="PS50082">
    <property type="entry name" value="WD_REPEATS_2"/>
    <property type="match status" value="1"/>
</dbReference>
<dbReference type="PROSITE" id="PS50294">
    <property type="entry name" value="WD_REPEATS_REGION"/>
    <property type="match status" value="1"/>
</dbReference>
<protein>
    <recommendedName>
        <fullName evidence="1">Ribosome biogenesis protein BOP1 homolog</fullName>
    </recommendedName>
</protein>
<reference key="1">
    <citation type="submission" date="2007-03" db="EMBL/GenBank/DDBJ databases">
        <title>Annotation of Culex pipiens quinquefasciatus.</title>
        <authorList>
            <consortium name="The Broad Institute Genome Sequencing Platform"/>
            <person name="Atkinson P.W."/>
            <person name="Hemingway J."/>
            <person name="Christensen B.M."/>
            <person name="Higgs S."/>
            <person name="Kodira C.D."/>
            <person name="Hannick L.I."/>
            <person name="Megy K."/>
            <person name="O'Leary S.B."/>
            <person name="Pearson M."/>
            <person name="Haas B.J."/>
            <person name="Mauceli E."/>
            <person name="Wortman J.R."/>
            <person name="Lee N.H."/>
            <person name="Guigo R."/>
            <person name="Stanke M."/>
            <person name="Alvarado L."/>
            <person name="Amedeo P."/>
            <person name="Antoine C.H."/>
            <person name="Arensburger P."/>
            <person name="Bidwell S.L."/>
            <person name="Crawford M."/>
            <person name="Camaro F."/>
            <person name="Devon K."/>
            <person name="Engels R."/>
            <person name="Hammond M."/>
            <person name="Howarth C."/>
            <person name="Koehrsen M."/>
            <person name="Lawson D."/>
            <person name="Montgomery P."/>
            <person name="Nene V."/>
            <person name="Nusbaum C."/>
            <person name="Puiu D."/>
            <person name="Romero-Severson J."/>
            <person name="Severson D.W."/>
            <person name="Shumway M."/>
            <person name="Sisk P."/>
            <person name="Stolte C."/>
            <person name="Zeng Q."/>
            <person name="Eisenstadt E."/>
            <person name="Fraser-Liggett C.M."/>
            <person name="Strausberg R."/>
            <person name="Galagan J."/>
            <person name="Birren B."/>
            <person name="Collins F.H."/>
        </authorList>
    </citation>
    <scope>NUCLEOTIDE SEQUENCE [LARGE SCALE GENOMIC DNA]</scope>
    <source>
        <strain>JHB</strain>
    </source>
</reference>
<comment type="function">
    <text evidence="1">Required for maturation of ribosomal RNAs and formation of the large ribosomal subunit.</text>
</comment>
<comment type="subcellular location">
    <subcellularLocation>
        <location evidence="1">Nucleus</location>
        <location evidence="1">Nucleolus</location>
    </subcellularLocation>
    <subcellularLocation>
        <location evidence="1">Nucleus</location>
        <location evidence="1">Nucleoplasm</location>
    </subcellularLocation>
</comment>
<comment type="similarity">
    <text evidence="1">Belongs to the WD repeat BOP1/ERB1 family.</text>
</comment>
<organism>
    <name type="scientific">Culex quinquefasciatus</name>
    <name type="common">Southern house mosquito</name>
    <name type="synonym">Culex pungens</name>
    <dbReference type="NCBI Taxonomy" id="7176"/>
    <lineage>
        <taxon>Eukaryota</taxon>
        <taxon>Metazoa</taxon>
        <taxon>Ecdysozoa</taxon>
        <taxon>Arthropoda</taxon>
        <taxon>Hexapoda</taxon>
        <taxon>Insecta</taxon>
        <taxon>Pterygota</taxon>
        <taxon>Neoptera</taxon>
        <taxon>Endopterygota</taxon>
        <taxon>Diptera</taxon>
        <taxon>Nematocera</taxon>
        <taxon>Culicoidea</taxon>
        <taxon>Culicidae</taxon>
        <taxon>Culicinae</taxon>
        <taxon>Culicini</taxon>
        <taxon>Culex</taxon>
        <taxon>Culex</taxon>
    </lineage>
</organism>
<sequence length="861" mass="98335">MVANKSKATKRKVAAAPQPPTAQDKPATNGRSTKQPEADSDQSASDYYESDEENLLANINNDDGDSSDSEGEGDASDGEVQGLNIESDSDFEEDDQEADGEEEEEDSADDVNSDSSPEEDEGESEEEEEDDDEGDLEFEEDLAEPEKPRAIKEGSKAGKKQAPEVESEEEDDLETKKLLEAAAKEDEKLAALDSVLGPDGEKKTRGVGSFPPERKTGRLKNSDEYAGGDTSDEEDIRNTVGNIPMHWYDEYKHIGYDWDGNRLIKPPKMDTIDEFLKRMEDPNFWRTVKDPQTGQNVVLSDEDVGLIKRIMAGRNPDQQYNDYEPWIEWFTSEVEKMPIRNIPDHKRSFLPSKSEKQKIGRLVHALKMGWVKTRAETERLAAAAKGPKFYMVWDSDHGKEDIRRIHDHVVAPKRPLPGHAESYNPPPEYLFNERELAEWNSHEEEPWRRKLHYIPQKFNSLREVPYYAQYVRERFLRCLDLYLCPRGKRTRVTVGPEYLIPKLPSPKDLQPFPTLQNLVYRGHTDMIRTISIEPKGEYLVTGSDDKTIKIWEVSTARCIKTIPTGDVVRSVAWCPNVKISLIAVASGKRTLLINPHVGDCLLSKKTDDLLAEAPKHEVVDNERISTAVQWVDVAEEEQKAGVRIVINHFREIKQVTWHGRGDYFATVMPEAQNRSVLIHQLSKRRSQFPFSKSKGLIQCVLFHPVKPCLFVATQRHIRVYDLVKQELLKKLFPSCKWISSMAIHPKGDNLLVATYEKKMMWFDLDLSTRPYQQLKLHFSAIRNVAFHQRYPLFASASDDRSVIVSHGMVYNDLMQNALIVPLRRLENHERVNDFGAFDVVFHPTQPWLFSSGADNTVRLYT</sequence>
<keyword id="KW-0539">Nucleus</keyword>
<keyword id="KW-1185">Reference proteome</keyword>
<keyword id="KW-0677">Repeat</keyword>
<keyword id="KW-0690">Ribosome biogenesis</keyword>
<keyword id="KW-0698">rRNA processing</keyword>
<keyword id="KW-0853">WD repeat</keyword>
<feature type="chain" id="PRO_0000370393" description="Ribosome biogenesis protein BOP1 homolog">
    <location>
        <begin position="1"/>
        <end position="861"/>
    </location>
</feature>
<feature type="repeat" description="WD 1">
    <location>
        <begin position="522"/>
        <end position="561"/>
    </location>
</feature>
<feature type="repeat" description="WD 2">
    <location>
        <begin position="563"/>
        <end position="603"/>
    </location>
</feature>
<feature type="repeat" description="WD 3">
    <location>
        <begin position="692"/>
        <end position="730"/>
    </location>
</feature>
<feature type="repeat" description="WD 4">
    <location>
        <begin position="733"/>
        <end position="772"/>
    </location>
</feature>
<feature type="repeat" description="WD 5">
    <location>
        <begin position="776"/>
        <end position="815"/>
    </location>
</feature>
<feature type="repeat" description="WD 6">
    <location>
        <begin position="831"/>
        <end position="861"/>
    </location>
</feature>
<feature type="region of interest" description="Disordered" evidence="2">
    <location>
        <begin position="1"/>
        <end position="237"/>
    </location>
</feature>
<feature type="compositionally biased region" description="Polar residues" evidence="2">
    <location>
        <begin position="29"/>
        <end position="45"/>
    </location>
</feature>
<feature type="compositionally biased region" description="Acidic residues" evidence="2">
    <location>
        <begin position="62"/>
        <end position="77"/>
    </location>
</feature>
<feature type="compositionally biased region" description="Acidic residues" evidence="2">
    <location>
        <begin position="87"/>
        <end position="143"/>
    </location>
</feature>
<feature type="compositionally biased region" description="Basic and acidic residues" evidence="2">
    <location>
        <begin position="144"/>
        <end position="156"/>
    </location>
</feature>
<feature type="compositionally biased region" description="Basic and acidic residues" evidence="2">
    <location>
        <begin position="174"/>
        <end position="190"/>
    </location>
</feature>
<feature type="compositionally biased region" description="Basic and acidic residues" evidence="2">
    <location>
        <begin position="212"/>
        <end position="223"/>
    </location>
</feature>
<name>BOP1_CULQU</name>